<dbReference type="EMBL" id="AE014292">
    <property type="protein sequence ID" value="AAN34093.1"/>
    <property type="molecule type" value="Genomic_DNA"/>
</dbReference>
<dbReference type="EMBL" id="CP002998">
    <property type="protein sequence ID" value="AEM20369.1"/>
    <property type="molecule type" value="Genomic_DNA"/>
</dbReference>
<dbReference type="RefSeq" id="WP_004690357.1">
    <property type="nucleotide sequence ID" value="NZ_KN046805.1"/>
</dbReference>
<dbReference type="KEGG" id="bms:BRA0921"/>
<dbReference type="KEGG" id="bsi:BS1330_II0913"/>
<dbReference type="PATRIC" id="fig|204722.22.peg.2509"/>
<dbReference type="HOGENOM" id="CLU_057473_0_0_5"/>
<dbReference type="PhylomeDB" id="Q8FVC3"/>
<dbReference type="Proteomes" id="UP000007104">
    <property type="component" value="Chromosome II"/>
</dbReference>
<dbReference type="Gene3D" id="2.40.160.20">
    <property type="match status" value="1"/>
</dbReference>
<dbReference type="InterPro" id="IPR011250">
    <property type="entry name" value="OMP/PagP_b-brl"/>
</dbReference>
<dbReference type="InterPro" id="IPR027385">
    <property type="entry name" value="OMP_b-brl"/>
</dbReference>
<dbReference type="Pfam" id="PF13505">
    <property type="entry name" value="OMP_b-brl"/>
    <property type="match status" value="1"/>
</dbReference>
<dbReference type="SUPFAM" id="SSF56925">
    <property type="entry name" value="OMPA-like"/>
    <property type="match status" value="1"/>
</dbReference>
<gene>
    <name type="ordered locus">BRA0921</name>
    <name type="ordered locus">BS1330_II0913</name>
</gene>
<feature type="signal peptide" evidence="1">
    <location>
        <begin position="1"/>
        <end position="23"/>
    </location>
</feature>
<feature type="chain" id="PRO_0000284478" description="Uncharacterized protein BRA0921/BS1330_II0913">
    <location>
        <begin position="24"/>
        <end position="284"/>
    </location>
</feature>
<accession>Q8FVC3</accession>
<accession>G0KDT1</accession>
<sequence>MKRGCAIAVMICGLITSVSAASAADLIVQEPVFEPLPQPALAGWYLRGDIGYNFKSKTGGKWNFWNQFEEPYRGVDDTFNYDDFSLKGGASYGVGVGYRFNDMLRTDLTLDYFRASINGRTNCPSYVKSSHGLNPVEDNCHYEDNSKASVWTAMANAYVDLPRVGPLTPYLGAGIGAAYVKYDTWKTSEICPTCTLQSDKDGFDSWRFAMALMAGVSYDLTDQLKLDLGYRYLRVNGGNAYGYDEQDRQVINQYGQGAGADGPQAKDNGFNIHTVRAGLRYEFR</sequence>
<keyword id="KW-0732">Signal</keyword>
<proteinExistence type="inferred from homology"/>
<comment type="similarity">
    <text evidence="2">Belongs to the surface antigen msp4 family.</text>
</comment>
<evidence type="ECO:0000255" key="1"/>
<evidence type="ECO:0000305" key="2"/>
<protein>
    <recommendedName>
        <fullName>Uncharacterized protein BRA0921/BS1330_II0913</fullName>
    </recommendedName>
</protein>
<name>Y921_BRUSU</name>
<organism>
    <name type="scientific">Brucella suis biovar 1 (strain 1330)</name>
    <dbReference type="NCBI Taxonomy" id="204722"/>
    <lineage>
        <taxon>Bacteria</taxon>
        <taxon>Pseudomonadati</taxon>
        <taxon>Pseudomonadota</taxon>
        <taxon>Alphaproteobacteria</taxon>
        <taxon>Hyphomicrobiales</taxon>
        <taxon>Brucellaceae</taxon>
        <taxon>Brucella/Ochrobactrum group</taxon>
        <taxon>Brucella</taxon>
    </lineage>
</organism>
<reference key="1">
    <citation type="journal article" date="2002" name="Proc. Natl. Acad. Sci. U.S.A.">
        <title>The Brucella suis genome reveals fundamental similarities between animal and plant pathogens and symbionts.</title>
        <authorList>
            <person name="Paulsen I.T."/>
            <person name="Seshadri R."/>
            <person name="Nelson K.E."/>
            <person name="Eisen J.A."/>
            <person name="Heidelberg J.F."/>
            <person name="Read T.D."/>
            <person name="Dodson R.J."/>
            <person name="Umayam L.A."/>
            <person name="Brinkac L.M."/>
            <person name="Beanan M.J."/>
            <person name="Daugherty S.C."/>
            <person name="DeBoy R.T."/>
            <person name="Durkin A.S."/>
            <person name="Kolonay J.F."/>
            <person name="Madupu R."/>
            <person name="Nelson W.C."/>
            <person name="Ayodeji B."/>
            <person name="Kraul M."/>
            <person name="Shetty J."/>
            <person name="Malek J.A."/>
            <person name="Van Aken S.E."/>
            <person name="Riedmuller S."/>
            <person name="Tettelin H."/>
            <person name="Gill S.R."/>
            <person name="White O."/>
            <person name="Salzberg S.L."/>
            <person name="Hoover D.L."/>
            <person name="Lindler L.E."/>
            <person name="Halling S.M."/>
            <person name="Boyle S.M."/>
            <person name="Fraser C.M."/>
        </authorList>
    </citation>
    <scope>NUCLEOTIDE SEQUENCE [LARGE SCALE GENOMIC DNA]</scope>
    <source>
        <strain>1330</strain>
    </source>
</reference>
<reference key="2">
    <citation type="journal article" date="2011" name="J. Bacteriol.">
        <title>Revised genome sequence of Brucella suis 1330.</title>
        <authorList>
            <person name="Tae H."/>
            <person name="Shallom S."/>
            <person name="Settlage R."/>
            <person name="Preston D."/>
            <person name="Adams L.G."/>
            <person name="Garner H.R."/>
        </authorList>
    </citation>
    <scope>NUCLEOTIDE SEQUENCE [LARGE SCALE GENOMIC DNA]</scope>
    <source>
        <strain>1330</strain>
    </source>
</reference>